<reference key="1">
    <citation type="journal article" date="2004" name="Nature">
        <title>Genome evolution in yeasts.</title>
        <authorList>
            <person name="Dujon B."/>
            <person name="Sherman D."/>
            <person name="Fischer G."/>
            <person name="Durrens P."/>
            <person name="Casaregola S."/>
            <person name="Lafontaine I."/>
            <person name="de Montigny J."/>
            <person name="Marck C."/>
            <person name="Neuveglise C."/>
            <person name="Talla E."/>
            <person name="Goffard N."/>
            <person name="Frangeul L."/>
            <person name="Aigle M."/>
            <person name="Anthouard V."/>
            <person name="Babour A."/>
            <person name="Barbe V."/>
            <person name="Barnay S."/>
            <person name="Blanchin S."/>
            <person name="Beckerich J.-M."/>
            <person name="Beyne E."/>
            <person name="Bleykasten C."/>
            <person name="Boisrame A."/>
            <person name="Boyer J."/>
            <person name="Cattolico L."/>
            <person name="Confanioleri F."/>
            <person name="de Daruvar A."/>
            <person name="Despons L."/>
            <person name="Fabre E."/>
            <person name="Fairhead C."/>
            <person name="Ferry-Dumazet H."/>
            <person name="Groppi A."/>
            <person name="Hantraye F."/>
            <person name="Hennequin C."/>
            <person name="Jauniaux N."/>
            <person name="Joyet P."/>
            <person name="Kachouri R."/>
            <person name="Kerrest A."/>
            <person name="Koszul R."/>
            <person name="Lemaire M."/>
            <person name="Lesur I."/>
            <person name="Ma L."/>
            <person name="Muller H."/>
            <person name="Nicaud J.-M."/>
            <person name="Nikolski M."/>
            <person name="Oztas S."/>
            <person name="Ozier-Kalogeropoulos O."/>
            <person name="Pellenz S."/>
            <person name="Potier S."/>
            <person name="Richard G.-F."/>
            <person name="Straub M.-L."/>
            <person name="Suleau A."/>
            <person name="Swennen D."/>
            <person name="Tekaia F."/>
            <person name="Wesolowski-Louvel M."/>
            <person name="Westhof E."/>
            <person name="Wirth B."/>
            <person name="Zeniou-Meyer M."/>
            <person name="Zivanovic Y."/>
            <person name="Bolotin-Fukuhara M."/>
            <person name="Thierry A."/>
            <person name="Bouchier C."/>
            <person name="Caudron B."/>
            <person name="Scarpelli C."/>
            <person name="Gaillardin C."/>
            <person name="Weissenbach J."/>
            <person name="Wincker P."/>
            <person name="Souciet J.-L."/>
        </authorList>
    </citation>
    <scope>NUCLEOTIDE SEQUENCE [LARGE SCALE GENOMIC DNA]</scope>
    <source>
        <strain>ATCC 2001 / BCRC 20586 / JCM 3761 / NBRC 0622 / NRRL Y-65 / CBS 138</strain>
    </source>
</reference>
<evidence type="ECO:0000250" key="1"/>
<evidence type="ECO:0000250" key="2">
    <source>
        <dbReference type="UniProtKB" id="P38273"/>
    </source>
</evidence>
<evidence type="ECO:0000305" key="3"/>
<dbReference type="EMBL" id="CR380949">
    <property type="protein sequence ID" value="CAG58110.1"/>
    <property type="molecule type" value="Genomic_DNA"/>
</dbReference>
<dbReference type="RefSeq" id="XP_445206.1">
    <property type="nucleotide sequence ID" value="XM_445206.1"/>
</dbReference>
<dbReference type="FunCoup" id="Q6FX38">
    <property type="interactions" value="115"/>
</dbReference>
<dbReference type="STRING" id="284593.Q6FX38"/>
<dbReference type="EnsemblFungi" id="CAGL0C00561g-T">
    <property type="protein sequence ID" value="CAGL0C00561g-T-p1"/>
    <property type="gene ID" value="CAGL0C00561g"/>
</dbReference>
<dbReference type="KEGG" id="cgr:2886768"/>
<dbReference type="CGD" id="CAL0127504">
    <property type="gene designation" value="CAGL0C00561g"/>
</dbReference>
<dbReference type="VEuPathDB" id="FungiDB:CAGL0C00561g"/>
<dbReference type="eggNOG" id="ENOG502QSQV">
    <property type="taxonomic scope" value="Eukaryota"/>
</dbReference>
<dbReference type="HOGENOM" id="CLU_418686_0_0_1"/>
<dbReference type="InParanoid" id="Q6FX38"/>
<dbReference type="OMA" id="YNCLFWY"/>
<dbReference type="Proteomes" id="UP000002428">
    <property type="component" value="Chromosome C"/>
</dbReference>
<dbReference type="GO" id="GO:0035658">
    <property type="term" value="C:Mon1-Ccz1 complex"/>
    <property type="evidence" value="ECO:0007669"/>
    <property type="project" value="EnsemblFungi"/>
</dbReference>
<dbReference type="GO" id="GO:0032585">
    <property type="term" value="C:multivesicular body membrane"/>
    <property type="evidence" value="ECO:0007669"/>
    <property type="project" value="UniProtKB-SubCell"/>
</dbReference>
<dbReference type="GO" id="GO:0005774">
    <property type="term" value="C:vacuolar membrane"/>
    <property type="evidence" value="ECO:0007669"/>
    <property type="project" value="UniProtKB-SubCell"/>
</dbReference>
<dbReference type="GO" id="GO:0005085">
    <property type="term" value="F:guanyl-nucleotide exchange factor activity"/>
    <property type="evidence" value="ECO:0007669"/>
    <property type="project" value="EnsemblFungi"/>
</dbReference>
<dbReference type="GO" id="GO:0032266">
    <property type="term" value="F:phosphatidylinositol-3-phosphate binding"/>
    <property type="evidence" value="ECO:0007669"/>
    <property type="project" value="EnsemblFungi"/>
</dbReference>
<dbReference type="GO" id="GO:0010314">
    <property type="term" value="F:phosphatidylinositol-5-phosphate binding"/>
    <property type="evidence" value="ECO:0007669"/>
    <property type="project" value="EnsemblFungi"/>
</dbReference>
<dbReference type="GO" id="GO:0001786">
    <property type="term" value="F:phosphatidylserine binding"/>
    <property type="evidence" value="ECO:0007669"/>
    <property type="project" value="EnsemblFungi"/>
</dbReference>
<dbReference type="GO" id="GO:0097352">
    <property type="term" value="P:autophagosome maturation"/>
    <property type="evidence" value="ECO:0007669"/>
    <property type="project" value="EnsemblFungi"/>
</dbReference>
<dbReference type="GO" id="GO:0032258">
    <property type="term" value="P:cytoplasm to vacuole targeting by the Cvt pathway"/>
    <property type="evidence" value="ECO:0007669"/>
    <property type="project" value="EnsemblFungi"/>
</dbReference>
<dbReference type="GO" id="GO:0032511">
    <property type="term" value="P:late endosome to vacuole transport via multivesicular body sorting pathway"/>
    <property type="evidence" value="ECO:0007669"/>
    <property type="project" value="EnsemblFungi"/>
</dbReference>
<dbReference type="GO" id="GO:0044395">
    <property type="term" value="P:protein targeting to vacuolar membrane"/>
    <property type="evidence" value="ECO:0007669"/>
    <property type="project" value="EnsemblFungi"/>
</dbReference>
<dbReference type="GO" id="GO:0048278">
    <property type="term" value="P:vesicle docking"/>
    <property type="evidence" value="ECO:0007669"/>
    <property type="project" value="EnsemblFungi"/>
</dbReference>
<dbReference type="InterPro" id="IPR013176">
    <property type="entry name" value="Ccz1"/>
</dbReference>
<dbReference type="InterPro" id="IPR043987">
    <property type="entry name" value="CCZ1/INTU/HSP4_longin_1"/>
</dbReference>
<dbReference type="PANTHER" id="PTHR13056">
    <property type="entry name" value="VACUOLAR FUSION PROTEIN CCZ1 HOMOLOG-RELATED"/>
    <property type="match status" value="1"/>
</dbReference>
<dbReference type="PANTHER" id="PTHR13056:SF0">
    <property type="entry name" value="VACUOLAR FUSION PROTEIN CCZ1 HOMOLOG-RELATED"/>
    <property type="match status" value="1"/>
</dbReference>
<dbReference type="Pfam" id="PF19031">
    <property type="entry name" value="Intu_longin_1"/>
    <property type="match status" value="1"/>
</dbReference>
<dbReference type="PIRSF" id="PIRSF011668">
    <property type="entry name" value="DUF1712_fun"/>
    <property type="match status" value="1"/>
</dbReference>
<name>CCZ1_CANGA</name>
<organism>
    <name type="scientific">Candida glabrata (strain ATCC 2001 / BCRC 20586 / JCM 3761 / NBRC 0622 / NRRL Y-65 / CBS 138)</name>
    <name type="common">Yeast</name>
    <name type="synonym">Nakaseomyces glabratus</name>
    <dbReference type="NCBI Taxonomy" id="284593"/>
    <lineage>
        <taxon>Eukaryota</taxon>
        <taxon>Fungi</taxon>
        <taxon>Dikarya</taxon>
        <taxon>Ascomycota</taxon>
        <taxon>Saccharomycotina</taxon>
        <taxon>Saccharomycetes</taxon>
        <taxon>Saccharomycetales</taxon>
        <taxon>Saccharomycetaceae</taxon>
        <taxon>Nakaseomyces</taxon>
    </lineage>
</organism>
<accession>Q6FX38</accession>
<keyword id="KW-0072">Autophagy</keyword>
<keyword id="KW-0967">Endosome</keyword>
<keyword id="KW-0472">Membrane</keyword>
<keyword id="KW-0653">Protein transport</keyword>
<keyword id="KW-1185">Reference proteome</keyword>
<keyword id="KW-0813">Transport</keyword>
<keyword id="KW-0926">Vacuole</keyword>
<sequence length="679" mass="78350">MSQSQSHGSGSPLKYVIVFRPGENKGEQEDSVVSEQLLLHHAFEDTELITLSAKLGKIGIIQALWTLSEDTNDTCKIIETEQETMITIKVEGEFYITLAIGVDPDLLAIPNPIFEGHLWNCYHFFTIKYGDFTSFEKHVLTDLLNEHFVSFWNDLYRKPESLTRNFLQYLCHDFYKVADLDPNGDKQWEATIIQDLLVQTENYLGIKDILVYNIPSTESTYVGKCKYGLIRNFCNEFEDLGHFSNWLQHIHTVFGKISSHVLAENVHYELHSGQLEQTNSDGIRDGNDLNLSDNNNETDSNTFSQLSTNFMHNLTLPITFAYDAIQEVGNTTGINNSVSLFMNYLPKWQNNSTASENEKNKTKARYGYLISPLAFDSLPKSYKLKKMHLKFNGEERKPYHVLFWYYNDVLVVIICNESFDSIWSKEYLNELNKHLENSIKTLYDQNLYDLPNTDNHSNKKNDILNFAYLITDKKRNKLYSSFPDLSWFNEQQETLYRTTLELVSNGLEQLRPQITANELSITTIDSNKQWGLDIMGNILSMLPSNSPVPVTKDASIPLMKKLNFLDKLNEKVLRDISIETLRAIETLSQSINSNIQEEKLLKTSDGILLYIRNDCNNLTIILKNWIQDTKHQTRALKYKNHTLNSYSTSIEDSNLFKNLGPDVISWYSEYKQILQDDSS</sequence>
<gene>
    <name type="primary">CCZ1</name>
    <name type="ordered locus">CAGL0C00561g</name>
</gene>
<feature type="chain" id="PRO_0000278849" description="Vacuolar fusion protein CCZ1">
    <location>
        <begin position="1"/>
        <end position="679"/>
    </location>
</feature>
<comment type="function">
    <text evidence="2">In complex with MON1, is required for multiple vacuole delivery pathways including the cytoplasm to vacuole transport (Cvt), autophagy, pexophagy and endocytosis. The MON1-CCZ1 complex acts at the fusion of vesicles with the vacuole, through its regulation of the SNARE complex during the coordinated priming and docking stages of fusion, and particularly at the stage of tethering/docking.</text>
</comment>
<comment type="subunit">
    <text evidence="2">Forms a complex with MON1.</text>
</comment>
<comment type="subcellular location">
    <subcellularLocation>
        <location evidence="1">Endosome</location>
        <location evidence="1">Multivesicular body membrane</location>
        <topology evidence="1">Peripheral membrane protein</topology>
    </subcellularLocation>
    <subcellularLocation>
        <location evidence="1">Prevacuolar compartment membrane</location>
        <topology evidence="1">Peripheral membrane protein</topology>
    </subcellularLocation>
    <subcellularLocation>
        <location evidence="1">Vacuole membrane</location>
        <topology evidence="1">Peripheral membrane protein</topology>
    </subcellularLocation>
    <subcellularLocation>
        <location evidence="2">Vesicle</location>
    </subcellularLocation>
</comment>
<comment type="similarity">
    <text evidence="3">Belongs to the CCZ1 family.</text>
</comment>
<protein>
    <recommendedName>
        <fullName>Vacuolar fusion protein CCZ1</fullName>
    </recommendedName>
</protein>
<proteinExistence type="inferred from homology"/>